<feature type="signal peptide" evidence="4">
    <location>
        <begin position="1"/>
        <end position="24"/>
    </location>
</feature>
<feature type="chain" id="PRO_0000418861" description="Alpha-amylase 1">
    <location>
        <begin position="25"/>
        <end position="423"/>
    </location>
</feature>
<feature type="active site" description="Nucleophile" evidence="3">
    <location>
        <position position="203"/>
    </location>
</feature>
<feature type="active site" description="Proton donor" evidence="3">
    <location>
        <position position="228"/>
    </location>
</feature>
<feature type="binding site" evidence="3">
    <location>
        <begin position="76"/>
        <end position="77"/>
    </location>
    <ligand>
        <name>substrate</name>
    </ligand>
</feature>
<feature type="binding site" evidence="3">
    <location>
        <position position="116"/>
    </location>
    <ligand>
        <name>Ca(2+)</name>
        <dbReference type="ChEBI" id="CHEBI:29108"/>
        <label>1</label>
    </ligand>
</feature>
<feature type="binding site" evidence="3">
    <location>
        <position position="133"/>
    </location>
    <ligand>
        <name>Ca(2+)</name>
        <dbReference type="ChEBI" id="CHEBI:29108"/>
        <label>2</label>
    </ligand>
</feature>
<feature type="binding site" evidence="3">
    <location>
        <position position="136"/>
    </location>
    <ligand>
        <name>Ca(2+)</name>
        <dbReference type="ChEBI" id="CHEBI:29108"/>
        <label>2</label>
    </ligand>
</feature>
<feature type="binding site" evidence="3">
    <location>
        <position position="138"/>
    </location>
    <ligand>
        <name>Ca(2+)</name>
        <dbReference type="ChEBI" id="CHEBI:29108"/>
        <label>2</label>
    </ligand>
</feature>
<feature type="binding site" evidence="3">
    <location>
        <position position="142"/>
    </location>
    <ligand>
        <name>Ca(2+)</name>
        <dbReference type="ChEBI" id="CHEBI:29108"/>
        <label>2</label>
    </ligand>
</feature>
<feature type="binding site" evidence="3">
    <location>
        <position position="152"/>
    </location>
    <ligand>
        <name>Ca(2+)</name>
        <dbReference type="ChEBI" id="CHEBI:29108"/>
        <label>3</label>
    </ligand>
</feature>
<feature type="binding site" evidence="3">
    <location>
        <position position="162"/>
    </location>
    <ligand>
        <name>Ca(2+)</name>
        <dbReference type="ChEBI" id="CHEBI:29108"/>
        <label>1</label>
    </ligand>
</feature>
<feature type="binding site" evidence="3">
    <location>
        <position position="166"/>
    </location>
    <ligand>
        <name>Ca(2+)</name>
        <dbReference type="ChEBI" id="CHEBI:29108"/>
        <label>3</label>
    </ligand>
</feature>
<feature type="binding site" evidence="3">
    <location>
        <position position="167"/>
    </location>
    <ligand>
        <name>Ca(2+)</name>
        <dbReference type="ChEBI" id="CHEBI:29108"/>
        <label>3</label>
    </ligand>
</feature>
<feature type="binding site" evidence="3">
    <location>
        <position position="170"/>
    </location>
    <ligand>
        <name>Ca(2+)</name>
        <dbReference type="ChEBI" id="CHEBI:29108"/>
        <label>3</label>
    </ligand>
</feature>
<feature type="binding site" evidence="3">
    <location>
        <position position="172"/>
    </location>
    <ligand>
        <name>Ca(2+)</name>
        <dbReference type="ChEBI" id="CHEBI:29108"/>
        <label>1</label>
    </ligand>
</feature>
<feature type="binding site" evidence="3">
    <location>
        <position position="172"/>
    </location>
    <ligand>
        <name>Ca(2+)</name>
        <dbReference type="ChEBI" id="CHEBI:29108"/>
        <label>3</label>
    </ligand>
</feature>
<feature type="binding site" evidence="3">
    <location>
        <begin position="201"/>
        <end position="206"/>
    </location>
    <ligand>
        <name>substrate</name>
    </ligand>
</feature>
<feature type="binding site" evidence="3">
    <location>
        <position position="207"/>
    </location>
    <ligand>
        <name>Ca(2+)</name>
        <dbReference type="ChEBI" id="CHEBI:29108"/>
        <label>1</label>
    </ligand>
</feature>
<feature type="binding site" evidence="2">
    <location>
        <position position="230"/>
    </location>
    <ligand>
        <name>substrate</name>
    </ligand>
</feature>
<feature type="binding site" evidence="2">
    <location>
        <position position="292"/>
    </location>
    <ligand>
        <name>substrate</name>
    </ligand>
</feature>
<feature type="binding site" evidence="2">
    <location>
        <position position="311"/>
    </location>
    <ligand>
        <name>substrate</name>
    </ligand>
</feature>
<feature type="binding site" evidence="2">
    <location>
        <position position="393"/>
    </location>
    <ligand>
        <name>substrate</name>
    </ligand>
</feature>
<feature type="binding site" evidence="1">
    <location>
        <begin position="398"/>
        <end position="400"/>
    </location>
    <ligand>
        <name>substrate</name>
    </ligand>
</feature>
<feature type="binding site" evidence="2">
    <location>
        <position position="420"/>
    </location>
    <ligand>
        <name>substrate</name>
    </ligand>
</feature>
<feature type="site" description="Transition state stabilizer" evidence="2">
    <location>
        <position position="312"/>
    </location>
</feature>
<feature type="sequence conflict" description="In Ref. 4; AAM64582." evidence="12" ref="4">
    <original>V</original>
    <variation>I</variation>
    <location>
        <position position="419"/>
    </location>
</feature>
<organism>
    <name type="scientific">Arabidopsis thaliana</name>
    <name type="common">Mouse-ear cress</name>
    <dbReference type="NCBI Taxonomy" id="3702"/>
    <lineage>
        <taxon>Eukaryota</taxon>
        <taxon>Viridiplantae</taxon>
        <taxon>Streptophyta</taxon>
        <taxon>Embryophyta</taxon>
        <taxon>Tracheophyta</taxon>
        <taxon>Spermatophyta</taxon>
        <taxon>Magnoliopsida</taxon>
        <taxon>eudicotyledons</taxon>
        <taxon>Gunneridae</taxon>
        <taxon>Pentapetalae</taxon>
        <taxon>rosids</taxon>
        <taxon>malvids</taxon>
        <taxon>Brassicales</taxon>
        <taxon>Brassicaceae</taxon>
        <taxon>Camelineae</taxon>
        <taxon>Arabidopsis</taxon>
    </lineage>
</organism>
<dbReference type="EC" id="3.2.1.1" evidence="8"/>
<dbReference type="EMBL" id="AL035523">
    <property type="protein sequence ID" value="CAB36742.1"/>
    <property type="status" value="ALT_SEQ"/>
    <property type="molecule type" value="Genomic_DNA"/>
</dbReference>
<dbReference type="EMBL" id="AL161562">
    <property type="protein sequence ID" value="CAB79409.1"/>
    <property type="status" value="ALT_SEQ"/>
    <property type="molecule type" value="Genomic_DNA"/>
</dbReference>
<dbReference type="EMBL" id="CP002687">
    <property type="protein sequence ID" value="AEE84990.1"/>
    <property type="molecule type" value="Genomic_DNA"/>
</dbReference>
<dbReference type="EMBL" id="AY065233">
    <property type="protein sequence ID" value="AAL38709.1"/>
    <property type="molecule type" value="mRNA"/>
</dbReference>
<dbReference type="EMBL" id="AY117294">
    <property type="protein sequence ID" value="AAM51369.1"/>
    <property type="molecule type" value="mRNA"/>
</dbReference>
<dbReference type="EMBL" id="AY087021">
    <property type="protein sequence ID" value="AAM64582.1"/>
    <property type="molecule type" value="mRNA"/>
</dbReference>
<dbReference type="PIR" id="T05521">
    <property type="entry name" value="T05521"/>
</dbReference>
<dbReference type="RefSeq" id="NP_567714.1">
    <property type="nucleotide sequence ID" value="NM_118632.3"/>
</dbReference>
<dbReference type="SMR" id="Q8VZ56"/>
<dbReference type="FunCoup" id="Q8VZ56">
    <property type="interactions" value="189"/>
</dbReference>
<dbReference type="STRING" id="3702.Q8VZ56"/>
<dbReference type="CAZy" id="GH13">
    <property type="family name" value="Glycoside Hydrolase Family 13"/>
</dbReference>
<dbReference type="PaxDb" id="3702-AT4G25000.1"/>
<dbReference type="ProMEX" id="Q8VZ56"/>
<dbReference type="ProteomicsDB" id="245051"/>
<dbReference type="EnsemblPlants" id="AT4G25000.1">
    <property type="protein sequence ID" value="AT4G25000.1"/>
    <property type="gene ID" value="AT4G25000"/>
</dbReference>
<dbReference type="GeneID" id="828603"/>
<dbReference type="Gramene" id="AT4G25000.1">
    <property type="protein sequence ID" value="AT4G25000.1"/>
    <property type="gene ID" value="AT4G25000"/>
</dbReference>
<dbReference type="KEGG" id="ath:AT4G25000"/>
<dbReference type="Araport" id="AT4G25000"/>
<dbReference type="TAIR" id="AT4G25000">
    <property type="gene designation" value="AMY1"/>
</dbReference>
<dbReference type="eggNOG" id="KOG0471">
    <property type="taxonomic scope" value="Eukaryota"/>
</dbReference>
<dbReference type="HOGENOM" id="CLU_030069_1_0_1"/>
<dbReference type="InParanoid" id="Q8VZ56"/>
<dbReference type="OMA" id="AIWMPVP"/>
<dbReference type="PhylomeDB" id="Q8VZ56"/>
<dbReference type="BioCyc" id="ARA:AT4G25000-MONOMER"/>
<dbReference type="PRO" id="PR:Q8VZ56"/>
<dbReference type="Proteomes" id="UP000006548">
    <property type="component" value="Chromosome 4"/>
</dbReference>
<dbReference type="ExpressionAtlas" id="Q8VZ56">
    <property type="expression patterns" value="baseline and differential"/>
</dbReference>
<dbReference type="GO" id="GO:0048046">
    <property type="term" value="C:apoplast"/>
    <property type="evidence" value="ECO:0000314"/>
    <property type="project" value="TAIR"/>
</dbReference>
<dbReference type="GO" id="GO:0005576">
    <property type="term" value="C:extracellular region"/>
    <property type="evidence" value="ECO:0000304"/>
    <property type="project" value="TAIR"/>
</dbReference>
<dbReference type="GO" id="GO:0004556">
    <property type="term" value="F:alpha-amylase activity"/>
    <property type="evidence" value="ECO:0000315"/>
    <property type="project" value="TAIR"/>
</dbReference>
<dbReference type="GO" id="GO:0005509">
    <property type="term" value="F:calcium ion binding"/>
    <property type="evidence" value="ECO:0007669"/>
    <property type="project" value="InterPro"/>
</dbReference>
<dbReference type="GO" id="GO:0005975">
    <property type="term" value="P:carbohydrate metabolic process"/>
    <property type="evidence" value="ECO:0007669"/>
    <property type="project" value="InterPro"/>
</dbReference>
<dbReference type="GO" id="GO:0009737">
    <property type="term" value="P:response to abscisic acid"/>
    <property type="evidence" value="ECO:0000270"/>
    <property type="project" value="TAIR"/>
</dbReference>
<dbReference type="GO" id="GO:0009739">
    <property type="term" value="P:response to gibberellin"/>
    <property type="evidence" value="ECO:0000270"/>
    <property type="project" value="TAIR"/>
</dbReference>
<dbReference type="CDD" id="cd11314">
    <property type="entry name" value="AmyAc_arch_bac_plant_AmyA"/>
    <property type="match status" value="1"/>
</dbReference>
<dbReference type="Gene3D" id="3.20.20.80">
    <property type="entry name" value="Glycosidases"/>
    <property type="match status" value="1"/>
</dbReference>
<dbReference type="Gene3D" id="2.60.40.1180">
    <property type="entry name" value="Golgi alpha-mannosidase II"/>
    <property type="match status" value="1"/>
</dbReference>
<dbReference type="InterPro" id="IPR012850">
    <property type="entry name" value="A-amylase_bs_C"/>
</dbReference>
<dbReference type="InterPro" id="IPR013775">
    <property type="entry name" value="A-amylase_pln"/>
</dbReference>
<dbReference type="InterPro" id="IPR006046">
    <property type="entry name" value="Alpha_amylase"/>
</dbReference>
<dbReference type="InterPro" id="IPR006047">
    <property type="entry name" value="Glyco_hydro_13_cat_dom"/>
</dbReference>
<dbReference type="InterPro" id="IPR013780">
    <property type="entry name" value="Glyco_hydro_b"/>
</dbReference>
<dbReference type="InterPro" id="IPR017853">
    <property type="entry name" value="Glycoside_hydrolase_SF"/>
</dbReference>
<dbReference type="PANTHER" id="PTHR43447">
    <property type="entry name" value="ALPHA-AMYLASE"/>
    <property type="match status" value="1"/>
</dbReference>
<dbReference type="Pfam" id="PF07821">
    <property type="entry name" value="Alpha-amyl_C2"/>
    <property type="match status" value="1"/>
</dbReference>
<dbReference type="Pfam" id="PF00128">
    <property type="entry name" value="Alpha-amylase"/>
    <property type="match status" value="1"/>
</dbReference>
<dbReference type="PIRSF" id="PIRSF001028">
    <property type="entry name" value="Alph-amls_plant"/>
    <property type="match status" value="1"/>
</dbReference>
<dbReference type="PRINTS" id="PR00110">
    <property type="entry name" value="ALPHAAMYLASE"/>
</dbReference>
<dbReference type="SMART" id="SM00642">
    <property type="entry name" value="Aamy"/>
    <property type="match status" value="1"/>
</dbReference>
<dbReference type="SMART" id="SM00810">
    <property type="entry name" value="Alpha-amyl_C2"/>
    <property type="match status" value="1"/>
</dbReference>
<dbReference type="SUPFAM" id="SSF51445">
    <property type="entry name" value="(Trans)glycosidases"/>
    <property type="match status" value="1"/>
</dbReference>
<dbReference type="SUPFAM" id="SSF51011">
    <property type="entry name" value="Glycosyl hydrolase domain"/>
    <property type="match status" value="1"/>
</dbReference>
<proteinExistence type="evidence at protein level"/>
<gene>
    <name evidence="10" type="primary">AMY1</name>
    <name evidence="14" type="ordered locus">At4g25000</name>
    <name evidence="15" type="ORF">F13M23.140</name>
</gene>
<reference key="1">
    <citation type="journal article" date="1999" name="Nature">
        <title>Sequence and analysis of chromosome 4 of the plant Arabidopsis thaliana.</title>
        <authorList>
            <person name="Mayer K.F.X."/>
            <person name="Schueller C."/>
            <person name="Wambutt R."/>
            <person name="Murphy G."/>
            <person name="Volckaert G."/>
            <person name="Pohl T."/>
            <person name="Duesterhoeft A."/>
            <person name="Stiekema W."/>
            <person name="Entian K.-D."/>
            <person name="Terryn N."/>
            <person name="Harris B."/>
            <person name="Ansorge W."/>
            <person name="Brandt P."/>
            <person name="Grivell L.A."/>
            <person name="Rieger M."/>
            <person name="Weichselgartner M."/>
            <person name="de Simone V."/>
            <person name="Obermaier B."/>
            <person name="Mache R."/>
            <person name="Mueller M."/>
            <person name="Kreis M."/>
            <person name="Delseny M."/>
            <person name="Puigdomenech P."/>
            <person name="Watson M."/>
            <person name="Schmidtheini T."/>
            <person name="Reichert B."/>
            <person name="Portetelle D."/>
            <person name="Perez-Alonso M."/>
            <person name="Boutry M."/>
            <person name="Bancroft I."/>
            <person name="Vos P."/>
            <person name="Hoheisel J."/>
            <person name="Zimmermann W."/>
            <person name="Wedler H."/>
            <person name="Ridley P."/>
            <person name="Langham S.-A."/>
            <person name="McCullagh B."/>
            <person name="Bilham L."/>
            <person name="Robben J."/>
            <person name="van der Schueren J."/>
            <person name="Grymonprez B."/>
            <person name="Chuang Y.-J."/>
            <person name="Vandenbussche F."/>
            <person name="Braeken M."/>
            <person name="Weltjens I."/>
            <person name="Voet M."/>
            <person name="Bastiaens I."/>
            <person name="Aert R."/>
            <person name="Defoor E."/>
            <person name="Weitzenegger T."/>
            <person name="Bothe G."/>
            <person name="Ramsperger U."/>
            <person name="Hilbert H."/>
            <person name="Braun M."/>
            <person name="Holzer E."/>
            <person name="Brandt A."/>
            <person name="Peters S."/>
            <person name="van Staveren M."/>
            <person name="Dirkse W."/>
            <person name="Mooijman P."/>
            <person name="Klein Lankhorst R."/>
            <person name="Rose M."/>
            <person name="Hauf J."/>
            <person name="Koetter P."/>
            <person name="Berneiser S."/>
            <person name="Hempel S."/>
            <person name="Feldpausch M."/>
            <person name="Lamberth S."/>
            <person name="Van den Daele H."/>
            <person name="De Keyser A."/>
            <person name="Buysshaert C."/>
            <person name="Gielen J."/>
            <person name="Villarroel R."/>
            <person name="De Clercq R."/>
            <person name="van Montagu M."/>
            <person name="Rogers J."/>
            <person name="Cronin A."/>
            <person name="Quail M.A."/>
            <person name="Bray-Allen S."/>
            <person name="Clark L."/>
            <person name="Doggett J."/>
            <person name="Hall S."/>
            <person name="Kay M."/>
            <person name="Lennard N."/>
            <person name="McLay K."/>
            <person name="Mayes R."/>
            <person name="Pettett A."/>
            <person name="Rajandream M.A."/>
            <person name="Lyne M."/>
            <person name="Benes V."/>
            <person name="Rechmann S."/>
            <person name="Borkova D."/>
            <person name="Bloecker H."/>
            <person name="Scharfe M."/>
            <person name="Grimm M."/>
            <person name="Loehnert T.-H."/>
            <person name="Dose S."/>
            <person name="de Haan M."/>
            <person name="Maarse A.C."/>
            <person name="Schaefer M."/>
            <person name="Mueller-Auer S."/>
            <person name="Gabel C."/>
            <person name="Fuchs M."/>
            <person name="Fartmann B."/>
            <person name="Granderath K."/>
            <person name="Dauner D."/>
            <person name="Herzl A."/>
            <person name="Neumann S."/>
            <person name="Argiriou A."/>
            <person name="Vitale D."/>
            <person name="Liguori R."/>
            <person name="Piravandi E."/>
            <person name="Massenet O."/>
            <person name="Quigley F."/>
            <person name="Clabauld G."/>
            <person name="Muendlein A."/>
            <person name="Felber R."/>
            <person name="Schnabl S."/>
            <person name="Hiller R."/>
            <person name="Schmidt W."/>
            <person name="Lecharny A."/>
            <person name="Aubourg S."/>
            <person name="Chefdor F."/>
            <person name="Cooke R."/>
            <person name="Berger C."/>
            <person name="Monfort A."/>
            <person name="Casacuberta E."/>
            <person name="Gibbons T."/>
            <person name="Weber N."/>
            <person name="Vandenbol M."/>
            <person name="Bargues M."/>
            <person name="Terol J."/>
            <person name="Torres A."/>
            <person name="Perez-Perez A."/>
            <person name="Purnelle B."/>
            <person name="Bent E."/>
            <person name="Johnson S."/>
            <person name="Tacon D."/>
            <person name="Jesse T."/>
            <person name="Heijnen L."/>
            <person name="Schwarz S."/>
            <person name="Scholler P."/>
            <person name="Heber S."/>
            <person name="Francs P."/>
            <person name="Bielke C."/>
            <person name="Frishman D."/>
            <person name="Haase D."/>
            <person name="Lemcke K."/>
            <person name="Mewes H.-W."/>
            <person name="Stocker S."/>
            <person name="Zaccaria P."/>
            <person name="Bevan M."/>
            <person name="Wilson R.K."/>
            <person name="de la Bastide M."/>
            <person name="Habermann K."/>
            <person name="Parnell L."/>
            <person name="Dedhia N."/>
            <person name="Gnoj L."/>
            <person name="Schutz K."/>
            <person name="Huang E."/>
            <person name="Spiegel L."/>
            <person name="Sekhon M."/>
            <person name="Murray J."/>
            <person name="Sheet P."/>
            <person name="Cordes M."/>
            <person name="Abu-Threideh J."/>
            <person name="Stoneking T."/>
            <person name="Kalicki J."/>
            <person name="Graves T."/>
            <person name="Harmon G."/>
            <person name="Edwards J."/>
            <person name="Latreille P."/>
            <person name="Courtney L."/>
            <person name="Cloud J."/>
            <person name="Abbott A."/>
            <person name="Scott K."/>
            <person name="Johnson D."/>
            <person name="Minx P."/>
            <person name="Bentley D."/>
            <person name="Fulton B."/>
            <person name="Miller N."/>
            <person name="Greco T."/>
            <person name="Kemp K."/>
            <person name="Kramer J."/>
            <person name="Fulton L."/>
            <person name="Mardis E."/>
            <person name="Dante M."/>
            <person name="Pepin K."/>
            <person name="Hillier L.W."/>
            <person name="Nelson J."/>
            <person name="Spieth J."/>
            <person name="Ryan E."/>
            <person name="Andrews S."/>
            <person name="Geisel C."/>
            <person name="Layman D."/>
            <person name="Du H."/>
            <person name="Ali J."/>
            <person name="Berghoff A."/>
            <person name="Jones K."/>
            <person name="Drone K."/>
            <person name="Cotton M."/>
            <person name="Joshu C."/>
            <person name="Antonoiu B."/>
            <person name="Zidanic M."/>
            <person name="Strong C."/>
            <person name="Sun H."/>
            <person name="Lamar B."/>
            <person name="Yordan C."/>
            <person name="Ma P."/>
            <person name="Zhong J."/>
            <person name="Preston R."/>
            <person name="Vil D."/>
            <person name="Shekher M."/>
            <person name="Matero A."/>
            <person name="Shah R."/>
            <person name="Swaby I.K."/>
            <person name="O'Shaughnessy A."/>
            <person name="Rodriguez M."/>
            <person name="Hoffman J."/>
            <person name="Till S."/>
            <person name="Granat S."/>
            <person name="Shohdy N."/>
            <person name="Hasegawa A."/>
            <person name="Hameed A."/>
            <person name="Lodhi M."/>
            <person name="Johnson A."/>
            <person name="Chen E."/>
            <person name="Marra M.A."/>
            <person name="Martienssen R."/>
            <person name="McCombie W.R."/>
        </authorList>
    </citation>
    <scope>NUCLEOTIDE SEQUENCE [LARGE SCALE GENOMIC DNA]</scope>
    <source>
        <strain>cv. Columbia</strain>
    </source>
</reference>
<reference key="2">
    <citation type="journal article" date="2017" name="Plant J.">
        <title>Araport11: a complete reannotation of the Arabidopsis thaliana reference genome.</title>
        <authorList>
            <person name="Cheng C.Y."/>
            <person name="Krishnakumar V."/>
            <person name="Chan A.P."/>
            <person name="Thibaud-Nissen F."/>
            <person name="Schobel S."/>
            <person name="Town C.D."/>
        </authorList>
    </citation>
    <scope>GENOME REANNOTATION</scope>
    <source>
        <strain>cv. Columbia</strain>
    </source>
</reference>
<reference key="3">
    <citation type="journal article" date="2003" name="Science">
        <title>Empirical analysis of transcriptional activity in the Arabidopsis genome.</title>
        <authorList>
            <person name="Yamada K."/>
            <person name="Lim J."/>
            <person name="Dale J.M."/>
            <person name="Chen H."/>
            <person name="Shinn P."/>
            <person name="Palm C.J."/>
            <person name="Southwick A.M."/>
            <person name="Wu H.C."/>
            <person name="Kim C.J."/>
            <person name="Nguyen M."/>
            <person name="Pham P.K."/>
            <person name="Cheuk R.F."/>
            <person name="Karlin-Newmann G."/>
            <person name="Liu S.X."/>
            <person name="Lam B."/>
            <person name="Sakano H."/>
            <person name="Wu T."/>
            <person name="Yu G."/>
            <person name="Miranda M."/>
            <person name="Quach H.L."/>
            <person name="Tripp M."/>
            <person name="Chang C.H."/>
            <person name="Lee J.M."/>
            <person name="Toriumi M.J."/>
            <person name="Chan M.M."/>
            <person name="Tang C.C."/>
            <person name="Onodera C.S."/>
            <person name="Deng J.M."/>
            <person name="Akiyama K."/>
            <person name="Ansari Y."/>
            <person name="Arakawa T."/>
            <person name="Banh J."/>
            <person name="Banno F."/>
            <person name="Bowser L."/>
            <person name="Brooks S.Y."/>
            <person name="Carninci P."/>
            <person name="Chao Q."/>
            <person name="Choy N."/>
            <person name="Enju A."/>
            <person name="Goldsmith A.D."/>
            <person name="Gurjal M."/>
            <person name="Hansen N.F."/>
            <person name="Hayashizaki Y."/>
            <person name="Johnson-Hopson C."/>
            <person name="Hsuan V.W."/>
            <person name="Iida K."/>
            <person name="Karnes M."/>
            <person name="Khan S."/>
            <person name="Koesema E."/>
            <person name="Ishida J."/>
            <person name="Jiang P.X."/>
            <person name="Jones T."/>
            <person name="Kawai J."/>
            <person name="Kamiya A."/>
            <person name="Meyers C."/>
            <person name="Nakajima M."/>
            <person name="Narusaka M."/>
            <person name="Seki M."/>
            <person name="Sakurai T."/>
            <person name="Satou M."/>
            <person name="Tamse R."/>
            <person name="Vaysberg M."/>
            <person name="Wallender E.K."/>
            <person name="Wong C."/>
            <person name="Yamamura Y."/>
            <person name="Yuan S."/>
            <person name="Shinozaki K."/>
            <person name="Davis R.W."/>
            <person name="Theologis A."/>
            <person name="Ecker J.R."/>
        </authorList>
    </citation>
    <scope>NUCLEOTIDE SEQUENCE [LARGE SCALE MRNA]</scope>
    <source>
        <strain>cv. Columbia</strain>
    </source>
</reference>
<reference key="4">
    <citation type="submission" date="2002-03" db="EMBL/GenBank/DDBJ databases">
        <title>Full-length cDNA from Arabidopsis thaliana.</title>
        <authorList>
            <person name="Brover V.V."/>
            <person name="Troukhan M.E."/>
            <person name="Alexandrov N.A."/>
            <person name="Lu Y.-P."/>
            <person name="Flavell R.B."/>
            <person name="Feldmann K.A."/>
        </authorList>
    </citation>
    <scope>NUCLEOTIDE SEQUENCE [LARGE SCALE MRNA]</scope>
</reference>
<reference key="5">
    <citation type="journal article" date="2004" name="Plant Physiol.">
        <title>Diurnal changes in the transcriptome encoding enzymes of starch metabolism provide evidence for both transcriptional and posttranscriptional regulation of starch metabolism in Arabidopsis leaves.</title>
        <authorList>
            <person name="Smith S.M."/>
            <person name="Fulton D.C."/>
            <person name="Chia T."/>
            <person name="Thorneycroft D."/>
            <person name="Chapple A."/>
            <person name="Dunstan H."/>
            <person name="Hylton C."/>
            <person name="Zeeman S.C."/>
            <person name="Smith A.M."/>
        </authorList>
    </citation>
    <scope>INDUCTION</scope>
</reference>
<reference key="6">
    <citation type="journal article" date="2005" name="J. Biol. Chem.">
        <title>alpha-Amylase is not required for breakdown of transitory starch in Arabidopsis leaves.</title>
        <authorList>
            <person name="Yu T.S."/>
            <person name="Zeeman S.C."/>
            <person name="Thorneycroft D."/>
            <person name="Fulton D.C."/>
            <person name="Dunstan H."/>
            <person name="Lue W.L."/>
            <person name="Hegemann B."/>
            <person name="Tung S.Y."/>
            <person name="Umemoto T."/>
            <person name="Chapple A."/>
            <person name="Tsai D.L."/>
            <person name="Wang S.M."/>
            <person name="Smith A.M."/>
            <person name="Chen J."/>
            <person name="Smith S.M."/>
        </authorList>
    </citation>
    <scope>DISRUPTION PHENOTYPE</scope>
</reference>
<reference key="7">
    <citation type="journal article" date="2005" name="Plant Cell Physiol.">
        <title>Contribution of gibberellins to the formation of Arabidopsis seed coat through starch degradation.</title>
        <authorList>
            <person name="Kim Y.C."/>
            <person name="Nakajima M."/>
            <person name="Nakayama A."/>
            <person name="Yamaguchi I."/>
        </authorList>
    </citation>
    <scope>TISSUE SPECIFICITY</scope>
    <scope>INDUCTION</scope>
</reference>
<reference key="8">
    <citation type="journal article" date="2007" name="Plant Cell Environ.">
        <title>An alpha-amylase (At4g25000) in Arabidopsis leaves is secreted and induced by biotic and abiotic stress.</title>
        <authorList>
            <person name="Doyle E.A."/>
            <person name="Lane A.M."/>
            <person name="Sides J.M."/>
            <person name="Mudgett M.B."/>
            <person name="Monroe J.D."/>
        </authorList>
    </citation>
    <scope>FUNCTION</scope>
    <scope>CATALYTIC ACTIVITY</scope>
    <scope>SUBCELLULAR LOCATION</scope>
    <scope>INDUCTION</scope>
</reference>
<reference key="9">
    <citation type="journal article" date="2018" name="New Phytol.">
        <title>Transcription factor RD26 is a key regulator of metabolic reprogramming during dark-induced senescence.</title>
        <authorList>
            <person name="Kamranfar I."/>
            <person name="Xue G.-P."/>
            <person name="Tohge T."/>
            <person name="Sedaghatmehr M."/>
            <person name="Fernie A.R."/>
            <person name="Balazadeh S."/>
            <person name="Mueller-Roeber B."/>
        </authorList>
    </citation>
    <scope>INDUCTION BY NAC072/RD26</scope>
    <source>
        <strain>cv. Columbia</strain>
    </source>
</reference>
<comment type="function">
    <text evidence="8">Possesses alpha-amylase activity in vitro, but seems not required for breakdown of transitory starch in leaves.</text>
</comment>
<comment type="catalytic activity">
    <reaction evidence="8">
        <text>Endohydrolysis of (1-&gt;4)-alpha-D-glucosidic linkages in polysaccharides containing three or more (1-&gt;4)-alpha-linked D-glucose units.</text>
        <dbReference type="EC" id="3.2.1.1"/>
    </reaction>
</comment>
<comment type="cofactor">
    <cofactor evidence="2">
        <name>Ca(2+)</name>
        <dbReference type="ChEBI" id="CHEBI:29108"/>
    </cofactor>
    <text evidence="2">Binds 3 Ca(2+) ions per subunit.</text>
</comment>
<comment type="subunit">
    <text evidence="1">Monomer.</text>
</comment>
<comment type="subcellular location">
    <subcellularLocation>
        <location evidence="13">Secreted</location>
        <location evidence="13">Extracellular space</location>
        <location evidence="13">Apoplast</location>
    </subcellularLocation>
</comment>
<comment type="tissue specificity">
    <text evidence="7">Expressed in leaves, stems, flowers and developing siliques.</text>
</comment>
<comment type="developmental stage">
    <text>Up-regulated during leaf senescence.</text>
</comment>
<comment type="induction">
    <text evidence="5 7 8 9">By gibberellin, abscisic acid (ABA), heat shock and infection with the bacterial pathogen P.syringae. Not regulated by transition from dark to light. Triggered by NAC072/RD26 during senescence (PubMed:29659022).</text>
</comment>
<comment type="disruption phenotype">
    <text evidence="6">Early flowering.</text>
</comment>
<comment type="similarity">
    <text evidence="12">Belongs to the glycosyl hydrolase 13 family.</text>
</comment>
<comment type="sequence caution" evidence="12">
    <conflict type="erroneous gene model prediction">
        <sequence resource="EMBL-CDS" id="CAB36742"/>
    </conflict>
</comment>
<comment type="sequence caution" evidence="12">
    <conflict type="erroneous gene model prediction">
        <sequence resource="EMBL-CDS" id="CAB79409"/>
    </conflict>
</comment>
<sequence length="423" mass="47378">MTSLHTLLFSSLLFFIVFPTFTFSSTLLFQSFNWESWKKEGGFYNSLHNSIDDIANAGITHLWLPPPSQSVAPEGYLPGKLYDLNSSKYGSEAELKSLIKALNQKGIKALADIVINHRTAERKDDKCGYCYFEGGTSDDRLDWDPSFVCRNDPKFPGTGNLDTGGDFDGAPDIDHLNPRVQKELSEWMNWLKTEIGFHGWRFDYVRGYASSITKLYVQNTSPDFAVGEKWDDMKYGGDGKLDYDQNEHRSGLKQWIEEAGGGVLTAFDFTTKGILQSAVKGELWRLKDSQGKPPGMIGIMPGNAVTFIDNHDTFRTWVFPSDKVLLGYVYILTHPGTPCIFYNHYIEWGLKESISKLVAIRNKNGIGSTSSVTIKAAEADLYLAMIDDKVIMKIGPKQDVGTLVPSNFALAYSGLDFAVWEKK</sequence>
<name>AMY1_ARATH</name>
<evidence type="ECO:0000250" key="1"/>
<evidence type="ECO:0000250" key="2">
    <source>
        <dbReference type="UniProtKB" id="P00693"/>
    </source>
</evidence>
<evidence type="ECO:0000250" key="3">
    <source>
        <dbReference type="UniProtKB" id="P04063"/>
    </source>
</evidence>
<evidence type="ECO:0000255" key="4"/>
<evidence type="ECO:0000269" key="5">
    <source>
    </source>
</evidence>
<evidence type="ECO:0000269" key="6">
    <source>
    </source>
</evidence>
<evidence type="ECO:0000269" key="7">
    <source>
    </source>
</evidence>
<evidence type="ECO:0000269" key="8">
    <source>
    </source>
</evidence>
<evidence type="ECO:0000269" key="9">
    <source>
    </source>
</evidence>
<evidence type="ECO:0000303" key="10">
    <source>
    </source>
</evidence>
<evidence type="ECO:0000303" key="11">
    <source>
    </source>
</evidence>
<evidence type="ECO:0000305" key="12"/>
<evidence type="ECO:0000305" key="13">
    <source>
    </source>
</evidence>
<evidence type="ECO:0000312" key="14">
    <source>
        <dbReference type="Araport" id="AT4G25000"/>
    </source>
</evidence>
<evidence type="ECO:0000312" key="15">
    <source>
        <dbReference type="EMBL" id="CAB36742.1"/>
    </source>
</evidence>
<accession>Q8VZ56</accession>
<accession>Q8LBS5</accession>
<accession>Q9SW26</accession>
<keyword id="KW-0052">Apoplast</keyword>
<keyword id="KW-0119">Carbohydrate metabolism</keyword>
<keyword id="KW-0326">Glycosidase</keyword>
<keyword id="KW-0378">Hydrolase</keyword>
<keyword id="KW-0479">Metal-binding</keyword>
<keyword id="KW-1185">Reference proteome</keyword>
<keyword id="KW-0964">Secreted</keyword>
<keyword id="KW-0732">Signal</keyword>
<protein>
    <recommendedName>
        <fullName evidence="10">Alpha-amylase 1</fullName>
        <shortName evidence="10">AtAMY1</shortName>
        <ecNumber evidence="8">3.2.1.1</ecNumber>
    </recommendedName>
    <alternativeName>
        <fullName evidence="11">1,4-alpha-D-glucan glucanohydrolase</fullName>
    </alternativeName>
</protein>